<proteinExistence type="evidence at protein level"/>
<name>NHRF4_MOUSE</name>
<evidence type="ECO:0000250" key="1">
    <source>
        <dbReference type="UniProtKB" id="Q86UT5"/>
    </source>
</evidence>
<evidence type="ECO:0000255" key="2">
    <source>
        <dbReference type="PROSITE-ProRule" id="PRU00143"/>
    </source>
</evidence>
<evidence type="ECO:0000269" key="3">
    <source>
    </source>
</evidence>
<evidence type="ECO:0000269" key="4">
    <source>
    </source>
</evidence>
<evidence type="ECO:0000269" key="5">
    <source>
    </source>
</evidence>
<evidence type="ECO:0000269" key="6">
    <source>
    </source>
</evidence>
<evidence type="ECO:0000305" key="7"/>
<evidence type="ECO:0000305" key="8">
    <source>
    </source>
</evidence>
<evidence type="ECO:0000312" key="9">
    <source>
        <dbReference type="EMBL" id="AAK20865.1"/>
    </source>
</evidence>
<comment type="function">
    <text evidence="1">Acts as a regulatory protein that associates with GUCY2C and negatively modulates its heat-stable enterotoxin-mediated activation (By similarity). Stimulates SLC9A3 activity in the presence of elevated calcium ions (By similarity).</text>
</comment>
<comment type="subunit">
    <text evidence="1 3 5 6">Interacts with the C-terminal region of GUCY2C (By similarity). Interacts with C-terminal region of SLC9A3 and the interactions decrease in response to elevated calcium ion levels (By similarity). Interacts with the C-terminal region of SLC34A1 (PubMed:11099500). Interacts with USP2 isoform 2 (PubMed:26756164). Interacts (via the third PDZ domain) with SLC26A3 (via PDZ-binding motif) (PubMed:22627094). This interaction leads to decreased expression of SLC26A3 on the cell membrane resulting in its reduced exchanger activity (By similarity).</text>
</comment>
<comment type="subcellular location">
    <subcellularLocation>
        <location evidence="6">Cell membrane</location>
        <topology evidence="8">Peripheral membrane protein</topology>
    </subcellularLocation>
    <subcellularLocation>
        <location evidence="6">Cytoplasm</location>
    </subcellularLocation>
    <text evidence="3 4 6">In kidney, predominantly localized to the subapical compartment of proximal tubular cells (PubMed:11099500). In intestinal epithelial cells, localizes to the ileal brush border and in a juxtanuclear compartment (PubMed:19088451). Expressed in the membrane, with relatively low expression in the cytoplasm (PubMed:26756164).</text>
</comment>
<comment type="tissue specificity">
    <text evidence="3">Expressed in kidney and small intestine. Not detected in heart, brain, spleen, lung, liver, skeletal muscle or testis.</text>
</comment>
<comment type="induction">
    <text evidence="6">Isoform 2: Expressed in a circadian manner in the intestine.</text>
</comment>
<comment type="PTM">
    <text evidence="5">Phosphorylation at Ser-329 negatively regulates its interaction with SLC26A3.</text>
</comment>
<keyword id="KW-1003">Cell membrane</keyword>
<keyword id="KW-0963">Cytoplasm</keyword>
<keyword id="KW-0472">Membrane</keyword>
<keyword id="KW-0597">Phosphoprotein</keyword>
<keyword id="KW-1185">Reference proteome</keyword>
<keyword id="KW-0677">Repeat</keyword>
<organism>
    <name type="scientific">Mus musculus</name>
    <name type="common">Mouse</name>
    <dbReference type="NCBI Taxonomy" id="10090"/>
    <lineage>
        <taxon>Eukaryota</taxon>
        <taxon>Metazoa</taxon>
        <taxon>Chordata</taxon>
        <taxon>Craniata</taxon>
        <taxon>Vertebrata</taxon>
        <taxon>Euteleostomi</taxon>
        <taxon>Mammalia</taxon>
        <taxon>Eutheria</taxon>
        <taxon>Euarchontoglires</taxon>
        <taxon>Glires</taxon>
        <taxon>Rodentia</taxon>
        <taxon>Myomorpha</taxon>
        <taxon>Muroidea</taxon>
        <taxon>Muridae</taxon>
        <taxon>Murinae</taxon>
        <taxon>Mus</taxon>
        <taxon>Mus</taxon>
    </lineage>
</organism>
<feature type="chain" id="PRO_0000058293" description="Na(+)/H(+) exchange regulatory cofactor NHE-RF4">
    <location>
        <begin position="1"/>
        <end position="498"/>
    </location>
</feature>
<feature type="domain" description="PDZ 1" evidence="2">
    <location>
        <begin position="49"/>
        <end position="130"/>
    </location>
</feature>
<feature type="domain" description="PDZ 2" evidence="2">
    <location>
        <begin position="157"/>
        <end position="235"/>
    </location>
</feature>
<feature type="domain" description="PDZ 3" evidence="2">
    <location>
        <begin position="263"/>
        <end position="346"/>
    </location>
</feature>
<feature type="domain" description="PDZ 4" evidence="2">
    <location>
        <begin position="394"/>
        <end position="475"/>
    </location>
</feature>
<feature type="modified residue" description="Phosphoserine" evidence="5">
    <location>
        <position position="329"/>
    </location>
</feature>
<feature type="mutagenesis site" description="Loss of phosphorylation. Significant increase in interaction with SLC26A3." evidence="5">
    <original>S</original>
    <variation>A</variation>
    <location>
        <position position="329"/>
    </location>
</feature>
<feature type="mutagenesis site" description="Phosphomimetic mutant. Significant decrease in interaction with SLC26A3." evidence="5">
    <original>S</original>
    <variation>D</variation>
    <location>
        <position position="329"/>
    </location>
</feature>
<feature type="sequence conflict" description="In Ref. 2; BAC35130." evidence="7" ref="2">
    <original>T</original>
    <variation>A</variation>
    <location>
        <position position="429"/>
    </location>
</feature>
<sequence>MEAAADLRDTALLTLKFKFNPRLGIDNPVLSLAEDQDQSDPWNLHRPRFCLLSKEEEKTFGFHLQQHLGKADHVVCRVDPGTSAQRQGLREGDRILAVNNNIVAHEDHAVVVRYIRASGPRVLLTVLAQHVHDVARVLQGSDAFLCPTLPSGVRPRLCHVVKDEGGFGFSVTHGSRGPFWLVLSAGGAAERAGVPPGARLLEVNGASVEKLTYNQLNRKLWQSGDQVTLLVAGLEVEEQCHQLGMPLAAPLAEGWALPAKPRCLNIEKGPEGFGFLLREEKGLDGRLGQFLWDVDPGLPADKAGMKAGDRLVAVAGESVDGLGHEETVSRIRAQGSCVSLIVVDPEADRFFSMVRLSPLLFLENTEIAAPPLAETKDLPVEDTVEPSGLAGSCQCFLYPGPGGGYGFRLCCVASGPCLFISQVTPGGSTARAGLQVGDTVLEVNGYPVGGDSELDRLQQLTEAEPPLCLKLGARNPQGLEAWISLESGEDWTLASELL</sequence>
<dbReference type="EMBL" id="AF334612">
    <property type="protein sequence ID" value="AAK20865.1"/>
    <property type="molecule type" value="mRNA"/>
</dbReference>
<dbReference type="EMBL" id="AK052748">
    <property type="protein sequence ID" value="BAC35130.1"/>
    <property type="molecule type" value="mRNA"/>
</dbReference>
<dbReference type="CCDS" id="CCDS23099.1"/>
<dbReference type="RefSeq" id="NP_573489.2">
    <property type="nucleotide sequence ID" value="NM_133226.2"/>
</dbReference>
<dbReference type="SMR" id="Q99MJ6"/>
<dbReference type="BioGRID" id="228423">
    <property type="interactions" value="1"/>
</dbReference>
<dbReference type="FunCoup" id="Q99MJ6">
    <property type="interactions" value="12"/>
</dbReference>
<dbReference type="IntAct" id="Q99MJ6">
    <property type="interactions" value="3"/>
</dbReference>
<dbReference type="MINT" id="Q99MJ6"/>
<dbReference type="STRING" id="10090.ENSMUSP00000034618"/>
<dbReference type="GlyGen" id="Q99MJ6">
    <property type="glycosylation" value="1 site"/>
</dbReference>
<dbReference type="iPTMnet" id="Q99MJ6"/>
<dbReference type="PhosphoSitePlus" id="Q99MJ6"/>
<dbReference type="PaxDb" id="10090-ENSMUSP00000034618"/>
<dbReference type="PeptideAtlas" id="Q99MJ6"/>
<dbReference type="DNASU" id="170761"/>
<dbReference type="GeneID" id="170761"/>
<dbReference type="KEGG" id="mmu:170761"/>
<dbReference type="UCSC" id="uc009pch.1">
    <property type="organism name" value="mouse"/>
</dbReference>
<dbReference type="AGR" id="MGI:2429554"/>
<dbReference type="CTD" id="79849"/>
<dbReference type="MGI" id="MGI:2429554">
    <property type="gene designation" value="Nherf4"/>
</dbReference>
<dbReference type="eggNOG" id="KOG3528">
    <property type="taxonomic scope" value="Eukaryota"/>
</dbReference>
<dbReference type="InParanoid" id="Q99MJ6"/>
<dbReference type="OrthoDB" id="10009200at2759"/>
<dbReference type="PhylomeDB" id="Q99MJ6"/>
<dbReference type="TreeFam" id="TF350449"/>
<dbReference type="BioGRID-ORCS" id="170761">
    <property type="hits" value="0 hits in 76 CRISPR screens"/>
</dbReference>
<dbReference type="PRO" id="PR:Q99MJ6"/>
<dbReference type="Proteomes" id="UP000000589">
    <property type="component" value="Unplaced"/>
</dbReference>
<dbReference type="RNAct" id="Q99MJ6">
    <property type="molecule type" value="protein"/>
</dbReference>
<dbReference type="GO" id="GO:0045177">
    <property type="term" value="C:apical part of cell"/>
    <property type="evidence" value="ECO:0000314"/>
    <property type="project" value="UniProtKB"/>
</dbReference>
<dbReference type="GO" id="GO:0005903">
    <property type="term" value="C:brush border"/>
    <property type="evidence" value="ECO:0000314"/>
    <property type="project" value="UniProtKB"/>
</dbReference>
<dbReference type="GO" id="GO:0005737">
    <property type="term" value="C:cytoplasm"/>
    <property type="evidence" value="ECO:0000314"/>
    <property type="project" value="UniProtKB"/>
</dbReference>
<dbReference type="GO" id="GO:0016020">
    <property type="term" value="C:membrane"/>
    <property type="evidence" value="ECO:0000314"/>
    <property type="project" value="UniProtKB"/>
</dbReference>
<dbReference type="GO" id="GO:0005886">
    <property type="term" value="C:plasma membrane"/>
    <property type="evidence" value="ECO:0007669"/>
    <property type="project" value="UniProtKB-SubCell"/>
</dbReference>
<dbReference type="GO" id="GO:0030251">
    <property type="term" value="F:guanylate cyclase inhibitor activity"/>
    <property type="evidence" value="ECO:0000250"/>
    <property type="project" value="UniProtKB"/>
</dbReference>
<dbReference type="CDD" id="cd06768">
    <property type="entry name" value="PDZ_NHERF-like"/>
    <property type="match status" value="3"/>
</dbReference>
<dbReference type="FunFam" id="2.30.42.10:FF:000177">
    <property type="entry name" value="delphilin isoform X1"/>
    <property type="match status" value="1"/>
</dbReference>
<dbReference type="FunFam" id="2.30.42.10:FF:000123">
    <property type="entry name" value="Na(+)/H(+) exchange regulatory cofactor NHE-RF4"/>
    <property type="match status" value="1"/>
</dbReference>
<dbReference type="Gene3D" id="2.30.42.10">
    <property type="match status" value="4"/>
</dbReference>
<dbReference type="InterPro" id="IPR051067">
    <property type="entry name" value="NHER"/>
</dbReference>
<dbReference type="InterPro" id="IPR001478">
    <property type="entry name" value="PDZ"/>
</dbReference>
<dbReference type="InterPro" id="IPR041489">
    <property type="entry name" value="PDZ_6"/>
</dbReference>
<dbReference type="InterPro" id="IPR036034">
    <property type="entry name" value="PDZ_sf"/>
</dbReference>
<dbReference type="PANTHER" id="PTHR14191:SF20">
    <property type="entry name" value="NA(+)_H(+) EXCHANGE REGULATORY COFACTOR NHE-RF4"/>
    <property type="match status" value="1"/>
</dbReference>
<dbReference type="PANTHER" id="PTHR14191">
    <property type="entry name" value="PDZ DOMAIN CONTAINING PROTEIN"/>
    <property type="match status" value="1"/>
</dbReference>
<dbReference type="Pfam" id="PF00595">
    <property type="entry name" value="PDZ"/>
    <property type="match status" value="3"/>
</dbReference>
<dbReference type="Pfam" id="PF17820">
    <property type="entry name" value="PDZ_6"/>
    <property type="match status" value="1"/>
</dbReference>
<dbReference type="SMART" id="SM00228">
    <property type="entry name" value="PDZ"/>
    <property type="match status" value="4"/>
</dbReference>
<dbReference type="SUPFAM" id="SSF50156">
    <property type="entry name" value="PDZ domain-like"/>
    <property type="match status" value="4"/>
</dbReference>
<dbReference type="PROSITE" id="PS50106">
    <property type="entry name" value="PDZ"/>
    <property type="match status" value="4"/>
</dbReference>
<accession>Q99MJ6</accession>
<accession>Q8BWE5</accession>
<protein>
    <recommendedName>
        <fullName evidence="7">Na(+)/H(+) exchange regulatory cofactor NHE-RF4</fullName>
        <shortName>NHERF-4</shortName>
    </recommendedName>
    <alternativeName>
        <fullName>Natrium-phosphate cotransporter IIa C-terminal-associated protein 2</fullName>
        <shortName>Na/Pi cotransporter C-terminal-associated protein 2</shortName>
        <shortName>NaPi-Cap2</shortName>
    </alternativeName>
    <alternativeName>
        <fullName>PDZ domain-containing protein 2</fullName>
    </alternativeName>
    <alternativeName>
        <fullName>PDZ domain-containing protein 3</fullName>
    </alternativeName>
    <alternativeName>
        <fullName>Sodium-hydrogen exchanger regulatory factor 4</fullName>
    </alternativeName>
</protein>
<reference evidence="7 9" key="1">
    <citation type="journal article" date="2001" name="J. Biol. Chem.">
        <title>Interaction of the type IIa Na/Pi-cotransporter with PDZ proteins.</title>
        <authorList>
            <person name="Gisler S.M."/>
            <person name="Stagljar I."/>
            <person name="Traebert M."/>
            <person name="Bacic D."/>
            <person name="Biber J."/>
            <person name="Murer H."/>
        </authorList>
    </citation>
    <scope>NUCLEOTIDE SEQUENCE [MRNA]</scope>
    <scope>INTERACTION WITH SLC34A1</scope>
    <scope>SUBCELLULAR LOCATION</scope>
    <scope>TISSUE SPECIFICITY</scope>
    <source>
        <strain evidence="9">BALB/cJ</strain>
        <tissue evidence="9">Kidney</tissue>
    </source>
</reference>
<reference key="2">
    <citation type="journal article" date="2005" name="Science">
        <title>The transcriptional landscape of the mammalian genome.</title>
        <authorList>
            <person name="Carninci P."/>
            <person name="Kasukawa T."/>
            <person name="Katayama S."/>
            <person name="Gough J."/>
            <person name="Frith M.C."/>
            <person name="Maeda N."/>
            <person name="Oyama R."/>
            <person name="Ravasi T."/>
            <person name="Lenhard B."/>
            <person name="Wells C."/>
            <person name="Kodzius R."/>
            <person name="Shimokawa K."/>
            <person name="Bajic V.B."/>
            <person name="Brenner S.E."/>
            <person name="Batalov S."/>
            <person name="Forrest A.R."/>
            <person name="Zavolan M."/>
            <person name="Davis M.J."/>
            <person name="Wilming L.G."/>
            <person name="Aidinis V."/>
            <person name="Allen J.E."/>
            <person name="Ambesi-Impiombato A."/>
            <person name="Apweiler R."/>
            <person name="Aturaliya R.N."/>
            <person name="Bailey T.L."/>
            <person name="Bansal M."/>
            <person name="Baxter L."/>
            <person name="Beisel K.W."/>
            <person name="Bersano T."/>
            <person name="Bono H."/>
            <person name="Chalk A.M."/>
            <person name="Chiu K.P."/>
            <person name="Choudhary V."/>
            <person name="Christoffels A."/>
            <person name="Clutterbuck D.R."/>
            <person name="Crowe M.L."/>
            <person name="Dalla E."/>
            <person name="Dalrymple B.P."/>
            <person name="de Bono B."/>
            <person name="Della Gatta G."/>
            <person name="di Bernardo D."/>
            <person name="Down T."/>
            <person name="Engstrom P."/>
            <person name="Fagiolini M."/>
            <person name="Faulkner G."/>
            <person name="Fletcher C.F."/>
            <person name="Fukushima T."/>
            <person name="Furuno M."/>
            <person name="Futaki S."/>
            <person name="Gariboldi M."/>
            <person name="Georgii-Hemming P."/>
            <person name="Gingeras T.R."/>
            <person name="Gojobori T."/>
            <person name="Green R.E."/>
            <person name="Gustincich S."/>
            <person name="Harbers M."/>
            <person name="Hayashi Y."/>
            <person name="Hensch T.K."/>
            <person name="Hirokawa N."/>
            <person name="Hill D."/>
            <person name="Huminiecki L."/>
            <person name="Iacono M."/>
            <person name="Ikeo K."/>
            <person name="Iwama A."/>
            <person name="Ishikawa T."/>
            <person name="Jakt M."/>
            <person name="Kanapin A."/>
            <person name="Katoh M."/>
            <person name="Kawasawa Y."/>
            <person name="Kelso J."/>
            <person name="Kitamura H."/>
            <person name="Kitano H."/>
            <person name="Kollias G."/>
            <person name="Krishnan S.P."/>
            <person name="Kruger A."/>
            <person name="Kummerfeld S.K."/>
            <person name="Kurochkin I.V."/>
            <person name="Lareau L.F."/>
            <person name="Lazarevic D."/>
            <person name="Lipovich L."/>
            <person name="Liu J."/>
            <person name="Liuni S."/>
            <person name="McWilliam S."/>
            <person name="Madan Babu M."/>
            <person name="Madera M."/>
            <person name="Marchionni L."/>
            <person name="Matsuda H."/>
            <person name="Matsuzawa S."/>
            <person name="Miki H."/>
            <person name="Mignone F."/>
            <person name="Miyake S."/>
            <person name="Morris K."/>
            <person name="Mottagui-Tabar S."/>
            <person name="Mulder N."/>
            <person name="Nakano N."/>
            <person name="Nakauchi H."/>
            <person name="Ng P."/>
            <person name="Nilsson R."/>
            <person name="Nishiguchi S."/>
            <person name="Nishikawa S."/>
            <person name="Nori F."/>
            <person name="Ohara O."/>
            <person name="Okazaki Y."/>
            <person name="Orlando V."/>
            <person name="Pang K.C."/>
            <person name="Pavan W.J."/>
            <person name="Pavesi G."/>
            <person name="Pesole G."/>
            <person name="Petrovsky N."/>
            <person name="Piazza S."/>
            <person name="Reed J."/>
            <person name="Reid J.F."/>
            <person name="Ring B.Z."/>
            <person name="Ringwald M."/>
            <person name="Rost B."/>
            <person name="Ruan Y."/>
            <person name="Salzberg S.L."/>
            <person name="Sandelin A."/>
            <person name="Schneider C."/>
            <person name="Schoenbach C."/>
            <person name="Sekiguchi K."/>
            <person name="Semple C.A."/>
            <person name="Seno S."/>
            <person name="Sessa L."/>
            <person name="Sheng Y."/>
            <person name="Shibata Y."/>
            <person name="Shimada H."/>
            <person name="Shimada K."/>
            <person name="Silva D."/>
            <person name="Sinclair B."/>
            <person name="Sperling S."/>
            <person name="Stupka E."/>
            <person name="Sugiura K."/>
            <person name="Sultana R."/>
            <person name="Takenaka Y."/>
            <person name="Taki K."/>
            <person name="Tammoja K."/>
            <person name="Tan S.L."/>
            <person name="Tang S."/>
            <person name="Taylor M.S."/>
            <person name="Tegner J."/>
            <person name="Teichmann S.A."/>
            <person name="Ueda H.R."/>
            <person name="van Nimwegen E."/>
            <person name="Verardo R."/>
            <person name="Wei C.L."/>
            <person name="Yagi K."/>
            <person name="Yamanishi H."/>
            <person name="Zabarovsky E."/>
            <person name="Zhu S."/>
            <person name="Zimmer A."/>
            <person name="Hide W."/>
            <person name="Bult C."/>
            <person name="Grimmond S.M."/>
            <person name="Teasdale R.D."/>
            <person name="Liu E.T."/>
            <person name="Brusic V."/>
            <person name="Quackenbush J."/>
            <person name="Wahlestedt C."/>
            <person name="Mattick J.S."/>
            <person name="Hume D.A."/>
            <person name="Kai C."/>
            <person name="Sasaki D."/>
            <person name="Tomaru Y."/>
            <person name="Fukuda S."/>
            <person name="Kanamori-Katayama M."/>
            <person name="Suzuki M."/>
            <person name="Aoki J."/>
            <person name="Arakawa T."/>
            <person name="Iida J."/>
            <person name="Imamura K."/>
            <person name="Itoh M."/>
            <person name="Kato T."/>
            <person name="Kawaji H."/>
            <person name="Kawagashira N."/>
            <person name="Kawashima T."/>
            <person name="Kojima M."/>
            <person name="Kondo S."/>
            <person name="Konno H."/>
            <person name="Nakano K."/>
            <person name="Ninomiya N."/>
            <person name="Nishio T."/>
            <person name="Okada M."/>
            <person name="Plessy C."/>
            <person name="Shibata K."/>
            <person name="Shiraki T."/>
            <person name="Suzuki S."/>
            <person name="Tagami M."/>
            <person name="Waki K."/>
            <person name="Watahiki A."/>
            <person name="Okamura-Oho Y."/>
            <person name="Suzuki H."/>
            <person name="Kawai J."/>
            <person name="Hayashizaki Y."/>
        </authorList>
    </citation>
    <scope>NUCLEOTIDE SEQUENCE [LARGE SCALE MRNA]</scope>
    <source>
        <strain>C57BL/6J</strain>
        <tissue>Kidney</tissue>
    </source>
</reference>
<reference key="3">
    <citation type="journal article" date="2008" name="Cell. Physiol. Biochem.">
        <title>Elevated intracellular calcium stimulates NHE3 activity by an IKEPP (NHERF4) dependent mechanism.</title>
        <authorList>
            <person name="Zachos N.C."/>
            <person name="Hodson C."/>
            <person name="Kovbasnjuk O."/>
            <person name="Li X."/>
            <person name="Thelin W.R."/>
            <person name="Cha B."/>
            <person name="Milgram S."/>
            <person name="Donowitz M."/>
        </authorList>
    </citation>
    <scope>SUBCELLULAR LOCATION</scope>
</reference>
<reference key="4">
    <citation type="journal article" date="2012" name="Cell. Signal.">
        <title>Regulation of SLC26A3 activity by NHERF4 PDZ-mediated interaction.</title>
        <authorList>
            <person name="Lee J.H."/>
            <person name="Nam J.H."/>
            <person name="Park J."/>
            <person name="Kang D.W."/>
            <person name="Kim J.Y."/>
            <person name="Lee M.G."/>
            <person name="Yoon J.S."/>
        </authorList>
    </citation>
    <scope>INTERACTION WITH SLC26A3</scope>
    <scope>PHOSPHORYLATION AT SER-329</scope>
    <scope>MUTAGENESIS OF SER-329</scope>
</reference>
<reference key="5">
    <citation type="journal article" date="2016" name="PLoS ONE">
        <title>USP2-45 is a circadian clock output effector regulating calcium absorption at the post-translational level.</title>
        <authorList>
            <person name="Pouly D."/>
            <person name="Chenaux S."/>
            <person name="Martin V."/>
            <person name="Babis M."/>
            <person name="Koch R."/>
            <person name="Nagoshi E."/>
            <person name="Katanaev V.L."/>
            <person name="Gachon F."/>
            <person name="Staub O."/>
        </authorList>
    </citation>
    <scope>FUNCTION</scope>
    <scope>INTERACTION WITH USP2</scope>
    <scope>SUBCELLULAR LOCATION</scope>
    <scope>INDUCTION</scope>
</reference>
<gene>
    <name type="primary">Nherf4</name>
    <name type="synonym">Pdzd3</name>
    <name type="synonym">Pdzk2</name>
</gene>